<reference key="1">
    <citation type="journal article" date="2000" name="Science">
        <title>The genome sequence of Drosophila melanogaster.</title>
        <authorList>
            <person name="Adams M.D."/>
            <person name="Celniker S.E."/>
            <person name="Holt R.A."/>
            <person name="Evans C.A."/>
            <person name="Gocayne J.D."/>
            <person name="Amanatides P.G."/>
            <person name="Scherer S.E."/>
            <person name="Li P.W."/>
            <person name="Hoskins R.A."/>
            <person name="Galle R.F."/>
            <person name="George R.A."/>
            <person name="Lewis S.E."/>
            <person name="Richards S."/>
            <person name="Ashburner M."/>
            <person name="Henderson S.N."/>
            <person name="Sutton G.G."/>
            <person name="Wortman J.R."/>
            <person name="Yandell M.D."/>
            <person name="Zhang Q."/>
            <person name="Chen L.X."/>
            <person name="Brandon R.C."/>
            <person name="Rogers Y.-H.C."/>
            <person name="Blazej R.G."/>
            <person name="Champe M."/>
            <person name="Pfeiffer B.D."/>
            <person name="Wan K.H."/>
            <person name="Doyle C."/>
            <person name="Baxter E.G."/>
            <person name="Helt G."/>
            <person name="Nelson C.R."/>
            <person name="Miklos G.L.G."/>
            <person name="Abril J.F."/>
            <person name="Agbayani A."/>
            <person name="An H.-J."/>
            <person name="Andrews-Pfannkoch C."/>
            <person name="Baldwin D."/>
            <person name="Ballew R.M."/>
            <person name="Basu A."/>
            <person name="Baxendale J."/>
            <person name="Bayraktaroglu L."/>
            <person name="Beasley E.M."/>
            <person name="Beeson K.Y."/>
            <person name="Benos P.V."/>
            <person name="Berman B.P."/>
            <person name="Bhandari D."/>
            <person name="Bolshakov S."/>
            <person name="Borkova D."/>
            <person name="Botchan M.R."/>
            <person name="Bouck J."/>
            <person name="Brokstein P."/>
            <person name="Brottier P."/>
            <person name="Burtis K.C."/>
            <person name="Busam D.A."/>
            <person name="Butler H."/>
            <person name="Cadieu E."/>
            <person name="Center A."/>
            <person name="Chandra I."/>
            <person name="Cherry J.M."/>
            <person name="Cawley S."/>
            <person name="Dahlke C."/>
            <person name="Davenport L.B."/>
            <person name="Davies P."/>
            <person name="de Pablos B."/>
            <person name="Delcher A."/>
            <person name="Deng Z."/>
            <person name="Mays A.D."/>
            <person name="Dew I."/>
            <person name="Dietz S.M."/>
            <person name="Dodson K."/>
            <person name="Doup L.E."/>
            <person name="Downes M."/>
            <person name="Dugan-Rocha S."/>
            <person name="Dunkov B.C."/>
            <person name="Dunn P."/>
            <person name="Durbin K.J."/>
            <person name="Evangelista C.C."/>
            <person name="Ferraz C."/>
            <person name="Ferriera S."/>
            <person name="Fleischmann W."/>
            <person name="Fosler C."/>
            <person name="Gabrielian A.E."/>
            <person name="Garg N.S."/>
            <person name="Gelbart W.M."/>
            <person name="Glasser K."/>
            <person name="Glodek A."/>
            <person name="Gong F."/>
            <person name="Gorrell J.H."/>
            <person name="Gu Z."/>
            <person name="Guan P."/>
            <person name="Harris M."/>
            <person name="Harris N.L."/>
            <person name="Harvey D.A."/>
            <person name="Heiman T.J."/>
            <person name="Hernandez J.R."/>
            <person name="Houck J."/>
            <person name="Hostin D."/>
            <person name="Houston K.A."/>
            <person name="Howland T.J."/>
            <person name="Wei M.-H."/>
            <person name="Ibegwam C."/>
            <person name="Jalali M."/>
            <person name="Kalush F."/>
            <person name="Karpen G.H."/>
            <person name="Ke Z."/>
            <person name="Kennison J.A."/>
            <person name="Ketchum K.A."/>
            <person name="Kimmel B.E."/>
            <person name="Kodira C.D."/>
            <person name="Kraft C.L."/>
            <person name="Kravitz S."/>
            <person name="Kulp D."/>
            <person name="Lai Z."/>
            <person name="Lasko P."/>
            <person name="Lei Y."/>
            <person name="Levitsky A.A."/>
            <person name="Li J.H."/>
            <person name="Li Z."/>
            <person name="Liang Y."/>
            <person name="Lin X."/>
            <person name="Liu X."/>
            <person name="Mattei B."/>
            <person name="McIntosh T.C."/>
            <person name="McLeod M.P."/>
            <person name="McPherson D."/>
            <person name="Merkulov G."/>
            <person name="Milshina N.V."/>
            <person name="Mobarry C."/>
            <person name="Morris J."/>
            <person name="Moshrefi A."/>
            <person name="Mount S.M."/>
            <person name="Moy M."/>
            <person name="Murphy B."/>
            <person name="Murphy L."/>
            <person name="Muzny D.M."/>
            <person name="Nelson D.L."/>
            <person name="Nelson D.R."/>
            <person name="Nelson K.A."/>
            <person name="Nixon K."/>
            <person name="Nusskern D.R."/>
            <person name="Pacleb J.M."/>
            <person name="Palazzolo M."/>
            <person name="Pittman G.S."/>
            <person name="Pan S."/>
            <person name="Pollard J."/>
            <person name="Puri V."/>
            <person name="Reese M.G."/>
            <person name="Reinert K."/>
            <person name="Remington K."/>
            <person name="Saunders R.D.C."/>
            <person name="Scheeler F."/>
            <person name="Shen H."/>
            <person name="Shue B.C."/>
            <person name="Siden-Kiamos I."/>
            <person name="Simpson M."/>
            <person name="Skupski M.P."/>
            <person name="Smith T.J."/>
            <person name="Spier E."/>
            <person name="Spradling A.C."/>
            <person name="Stapleton M."/>
            <person name="Strong R."/>
            <person name="Sun E."/>
            <person name="Svirskas R."/>
            <person name="Tector C."/>
            <person name="Turner R."/>
            <person name="Venter E."/>
            <person name="Wang A.H."/>
            <person name="Wang X."/>
            <person name="Wang Z.-Y."/>
            <person name="Wassarman D.A."/>
            <person name="Weinstock G.M."/>
            <person name="Weissenbach J."/>
            <person name="Williams S.M."/>
            <person name="Woodage T."/>
            <person name="Worley K.C."/>
            <person name="Wu D."/>
            <person name="Yang S."/>
            <person name="Yao Q.A."/>
            <person name="Ye J."/>
            <person name="Yeh R.-F."/>
            <person name="Zaveri J.S."/>
            <person name="Zhan M."/>
            <person name="Zhang G."/>
            <person name="Zhao Q."/>
            <person name="Zheng L."/>
            <person name="Zheng X.H."/>
            <person name="Zhong F.N."/>
            <person name="Zhong W."/>
            <person name="Zhou X."/>
            <person name="Zhu S.C."/>
            <person name="Zhu X."/>
            <person name="Smith H.O."/>
            <person name="Gibbs R.A."/>
            <person name="Myers E.W."/>
            <person name="Rubin G.M."/>
            <person name="Venter J.C."/>
        </authorList>
    </citation>
    <scope>NUCLEOTIDE SEQUENCE [LARGE SCALE GENOMIC DNA]</scope>
    <source>
        <strain>Berkeley</strain>
    </source>
</reference>
<reference key="2">
    <citation type="journal article" date="2002" name="Genome Biol.">
        <title>Annotation of the Drosophila melanogaster euchromatic genome: a systematic review.</title>
        <authorList>
            <person name="Misra S."/>
            <person name="Crosby M.A."/>
            <person name="Mungall C.J."/>
            <person name="Matthews B.B."/>
            <person name="Campbell K.S."/>
            <person name="Hradecky P."/>
            <person name="Huang Y."/>
            <person name="Kaminker J.S."/>
            <person name="Millburn G.H."/>
            <person name="Prochnik S.E."/>
            <person name="Smith C.D."/>
            <person name="Tupy J.L."/>
            <person name="Whitfield E.J."/>
            <person name="Bayraktaroglu L."/>
            <person name="Berman B.P."/>
            <person name="Bettencourt B.R."/>
            <person name="Celniker S.E."/>
            <person name="de Grey A.D.N.J."/>
            <person name="Drysdale R.A."/>
            <person name="Harris N.L."/>
            <person name="Richter J."/>
            <person name="Russo S."/>
            <person name="Schroeder A.J."/>
            <person name="Shu S.Q."/>
            <person name="Stapleton M."/>
            <person name="Yamada C."/>
            <person name="Ashburner M."/>
            <person name="Gelbart W.M."/>
            <person name="Rubin G.M."/>
            <person name="Lewis S.E."/>
        </authorList>
    </citation>
    <scope>GENOME REANNOTATION</scope>
    <source>
        <strain>Berkeley</strain>
    </source>
</reference>
<accession>Q9VDM6</accession>
<gene>
    <name evidence="2" type="primary">eIF3g2</name>
    <name evidence="1" type="synonym">eIF3-S4</name>
    <name evidence="2" type="synonym">eIF3gb</name>
    <name evidence="2" type="ORF">CG10881</name>
</gene>
<name>EI3G2_DROME</name>
<protein>
    <recommendedName>
        <fullName evidence="2">Eukaryotic translation initiation factor 3 subunit G-2</fullName>
    </recommendedName>
    <alternativeName>
        <fullName evidence="1">Eukaryotic translation initiation factor 3 RNA-binding subunit 2</fullName>
        <shortName evidence="1">eIF-3 RNA-binding subunit 2</shortName>
    </alternativeName>
    <alternativeName>
        <fullName evidence="1">Eukaryotic translation initiation factor 3 subunit 4-2</fullName>
    </alternativeName>
</protein>
<organism>
    <name type="scientific">Drosophila melanogaster</name>
    <name type="common">Fruit fly</name>
    <dbReference type="NCBI Taxonomy" id="7227"/>
    <lineage>
        <taxon>Eukaryota</taxon>
        <taxon>Metazoa</taxon>
        <taxon>Ecdysozoa</taxon>
        <taxon>Arthropoda</taxon>
        <taxon>Hexapoda</taxon>
        <taxon>Insecta</taxon>
        <taxon>Pterygota</taxon>
        <taxon>Neoptera</taxon>
        <taxon>Endopterygota</taxon>
        <taxon>Diptera</taxon>
        <taxon>Brachycera</taxon>
        <taxon>Muscomorpha</taxon>
        <taxon>Ephydroidea</taxon>
        <taxon>Drosophilidae</taxon>
        <taxon>Drosophila</taxon>
        <taxon>Sophophora</taxon>
    </lineage>
</organism>
<feature type="chain" id="PRO_0000365414" description="Eukaryotic translation initiation factor 3 subunit G-2">
    <location>
        <begin position="1"/>
        <end position="273"/>
    </location>
</feature>
<feature type="domain" description="RRM" evidence="1">
    <location>
        <begin position="193"/>
        <end position="271"/>
    </location>
</feature>
<keyword id="KW-0963">Cytoplasm</keyword>
<keyword id="KW-0396">Initiation factor</keyword>
<keyword id="KW-0648">Protein biosynthesis</keyword>
<keyword id="KW-1185">Reference proteome</keyword>
<keyword id="KW-0694">RNA-binding</keyword>
<comment type="function">
    <text evidence="1">RNA-binding component of the eukaryotic translation initiation factor 3 (eIF-3) complex, which is involved in protein synthesis of a specialized repertoire of mRNAs and, together with other initiation factors, stimulates binding of mRNA and methionyl-tRNAi to the 40S ribosome. The eIF-3 complex specifically targets and initiates translation of a subset of mRNAs involved in cell proliferation. This subunit can bind 18S rRNA.</text>
</comment>
<comment type="subunit">
    <text evidence="1">Component of the eukaryotic translation initiation factor 3 (eIF-3) complex. The eIF-3 complex interacts with pix.</text>
</comment>
<comment type="subcellular location">
    <subcellularLocation>
        <location evidence="1">Cytoplasm</location>
    </subcellularLocation>
</comment>
<comment type="similarity">
    <text evidence="1">Belongs to the eIF-3 subunit G family.</text>
</comment>
<dbReference type="EMBL" id="AE014297">
    <property type="protein sequence ID" value="AAF55764.1"/>
    <property type="molecule type" value="Genomic_DNA"/>
</dbReference>
<dbReference type="RefSeq" id="NP_650887.1">
    <property type="nucleotide sequence ID" value="NM_142630.3"/>
</dbReference>
<dbReference type="SMR" id="Q9VDM6"/>
<dbReference type="BioGRID" id="67402">
    <property type="interactions" value="1"/>
</dbReference>
<dbReference type="FunCoup" id="Q9VDM6">
    <property type="interactions" value="1166"/>
</dbReference>
<dbReference type="STRING" id="7227.FBpp0083293"/>
<dbReference type="PaxDb" id="7227-FBpp0083293"/>
<dbReference type="DNASU" id="42422"/>
<dbReference type="EnsemblMetazoa" id="FBtr0083885">
    <property type="protein sequence ID" value="FBpp0083293"/>
    <property type="gene ID" value="FBgn0038796"/>
</dbReference>
<dbReference type="GeneID" id="42422"/>
<dbReference type="KEGG" id="dme:Dmel_CG10881"/>
<dbReference type="UCSC" id="CG10881-RA">
    <property type="organism name" value="d. melanogaster"/>
</dbReference>
<dbReference type="AGR" id="FB:FBgn0038796"/>
<dbReference type="CTD" id="42422"/>
<dbReference type="FlyBase" id="FBgn0038796">
    <property type="gene designation" value="eIF3g2"/>
</dbReference>
<dbReference type="VEuPathDB" id="VectorBase:FBgn0038796"/>
<dbReference type="eggNOG" id="KOG0122">
    <property type="taxonomic scope" value="Eukaryota"/>
</dbReference>
<dbReference type="GeneTree" id="ENSGT00510000047802"/>
<dbReference type="HOGENOM" id="CLU_034595_0_0_1"/>
<dbReference type="InParanoid" id="Q9VDM6"/>
<dbReference type="OMA" id="EEVHMVF"/>
<dbReference type="OrthoDB" id="639027at2759"/>
<dbReference type="PhylomeDB" id="Q9VDM6"/>
<dbReference type="BioGRID-ORCS" id="42422">
    <property type="hits" value="0 hits in 1 CRISPR screen"/>
</dbReference>
<dbReference type="GenomeRNAi" id="42422"/>
<dbReference type="PRO" id="PR:Q9VDM6"/>
<dbReference type="Proteomes" id="UP000000803">
    <property type="component" value="Chromosome 3R"/>
</dbReference>
<dbReference type="Bgee" id="FBgn0038796">
    <property type="expression patterns" value="Expressed in early elongation stage spermatid (Drosophila) in testis and 19 other cell types or tissues"/>
</dbReference>
<dbReference type="ExpressionAtlas" id="Q9VDM6">
    <property type="expression patterns" value="baseline and differential"/>
</dbReference>
<dbReference type="GO" id="GO:0016282">
    <property type="term" value="C:eukaryotic 43S preinitiation complex"/>
    <property type="evidence" value="ECO:0007669"/>
    <property type="project" value="UniProtKB-UniRule"/>
</dbReference>
<dbReference type="GO" id="GO:0033290">
    <property type="term" value="C:eukaryotic 48S preinitiation complex"/>
    <property type="evidence" value="ECO:0007669"/>
    <property type="project" value="UniProtKB-UniRule"/>
</dbReference>
<dbReference type="GO" id="GO:0005852">
    <property type="term" value="C:eukaryotic translation initiation factor 3 complex"/>
    <property type="evidence" value="ECO:0000250"/>
    <property type="project" value="FlyBase"/>
</dbReference>
<dbReference type="GO" id="GO:0003729">
    <property type="term" value="F:mRNA binding"/>
    <property type="evidence" value="ECO:0000250"/>
    <property type="project" value="FlyBase"/>
</dbReference>
<dbReference type="GO" id="GO:0003743">
    <property type="term" value="F:translation initiation factor activity"/>
    <property type="evidence" value="ECO:0000250"/>
    <property type="project" value="FlyBase"/>
</dbReference>
<dbReference type="GO" id="GO:0001732">
    <property type="term" value="P:formation of cytoplasmic translation initiation complex"/>
    <property type="evidence" value="ECO:0007669"/>
    <property type="project" value="UniProtKB-UniRule"/>
</dbReference>
<dbReference type="GO" id="GO:0006413">
    <property type="term" value="P:translational initiation"/>
    <property type="evidence" value="ECO:0000250"/>
    <property type="project" value="FlyBase"/>
</dbReference>
<dbReference type="CDD" id="cd12933">
    <property type="entry name" value="eIF3G"/>
    <property type="match status" value="1"/>
</dbReference>
<dbReference type="CDD" id="cd12408">
    <property type="entry name" value="RRM_eIF3G_like"/>
    <property type="match status" value="1"/>
</dbReference>
<dbReference type="FunFam" id="3.30.70.330:FF:001070">
    <property type="entry name" value="Eukaryotic translation initiation factor 3 subunit G"/>
    <property type="match status" value="1"/>
</dbReference>
<dbReference type="Gene3D" id="3.30.70.330">
    <property type="match status" value="1"/>
</dbReference>
<dbReference type="HAMAP" id="MF_03006">
    <property type="entry name" value="eIF3g"/>
    <property type="match status" value="1"/>
</dbReference>
<dbReference type="InterPro" id="IPR017334">
    <property type="entry name" value="eIF3_g"/>
</dbReference>
<dbReference type="InterPro" id="IPR024675">
    <property type="entry name" value="eIF3g_N"/>
</dbReference>
<dbReference type="InterPro" id="IPR034240">
    <property type="entry name" value="eIF3G_RRM"/>
</dbReference>
<dbReference type="InterPro" id="IPR012677">
    <property type="entry name" value="Nucleotide-bd_a/b_plait_sf"/>
</dbReference>
<dbReference type="InterPro" id="IPR035979">
    <property type="entry name" value="RBD_domain_sf"/>
</dbReference>
<dbReference type="InterPro" id="IPR000504">
    <property type="entry name" value="RRM_dom"/>
</dbReference>
<dbReference type="PANTHER" id="PTHR10352">
    <property type="entry name" value="EUKARYOTIC TRANSLATION INITIATION FACTOR 3 SUBUNIT G"/>
    <property type="match status" value="1"/>
</dbReference>
<dbReference type="Pfam" id="PF12353">
    <property type="entry name" value="eIF3g"/>
    <property type="match status" value="1"/>
</dbReference>
<dbReference type="Pfam" id="PF00076">
    <property type="entry name" value="RRM_1"/>
    <property type="match status" value="1"/>
</dbReference>
<dbReference type="PIRSF" id="PIRSF037949">
    <property type="entry name" value="Transl_init_eIF-3_RNA-bind"/>
    <property type="match status" value="1"/>
</dbReference>
<dbReference type="SMART" id="SM00360">
    <property type="entry name" value="RRM"/>
    <property type="match status" value="1"/>
</dbReference>
<dbReference type="SUPFAM" id="SSF54928">
    <property type="entry name" value="RNA-binding domain, RBD"/>
    <property type="match status" value="1"/>
</dbReference>
<dbReference type="PROSITE" id="PS50102">
    <property type="entry name" value="RRM"/>
    <property type="match status" value="1"/>
</dbReference>
<evidence type="ECO:0000255" key="1">
    <source>
        <dbReference type="HAMAP-Rule" id="MF_03006"/>
    </source>
</evidence>
<evidence type="ECO:0000312" key="2">
    <source>
        <dbReference type="FlyBase" id="FBgn0038796"/>
    </source>
</evidence>
<sequence>MKTFVTSWADEVDADYVDGLPPSNEYIKGDFKYVTEYKFNDDGKKVKVVRTFKIEKQIVPKAVARRRNWVKFGDSRSDKPGPNSQTTMASEEIFMQFIGSKDFDQTHETQLDPGKNIAKCRICNGEHWSVNCPYKGTSMDSKTVMETKANAAAAAAISDPSKTGKYVPPFMKDGGGISGSKNWGRGRDRDDSSAVRISNLSESMTETDLEELVKKIGPHTKMYLAREKNSGLCKGFAYVHFKFRQDAAAAIEVLNGHGYDHLILCVEWSKPQP</sequence>
<proteinExistence type="inferred from homology"/>